<keyword id="KW-1185">Reference proteome</keyword>
<keyword id="KW-0687">Ribonucleoprotein</keyword>
<keyword id="KW-0689">Ribosomal protein</keyword>
<keyword id="KW-0694">RNA-binding</keyword>
<keyword id="KW-0699">rRNA-binding</keyword>
<dbReference type="EMBL" id="CP000453">
    <property type="protein sequence ID" value="ABI55825.1"/>
    <property type="molecule type" value="Genomic_DNA"/>
</dbReference>
<dbReference type="RefSeq" id="WP_011628220.1">
    <property type="nucleotide sequence ID" value="NC_008340.1"/>
</dbReference>
<dbReference type="SMR" id="Q0ABG2"/>
<dbReference type="KEGG" id="aeh:Mlg_0471"/>
<dbReference type="eggNOG" id="COG0199">
    <property type="taxonomic scope" value="Bacteria"/>
</dbReference>
<dbReference type="HOGENOM" id="CLU_139869_0_1_6"/>
<dbReference type="OrthoDB" id="9810484at2"/>
<dbReference type="Proteomes" id="UP000001962">
    <property type="component" value="Chromosome"/>
</dbReference>
<dbReference type="GO" id="GO:0005737">
    <property type="term" value="C:cytoplasm"/>
    <property type="evidence" value="ECO:0007669"/>
    <property type="project" value="UniProtKB-ARBA"/>
</dbReference>
<dbReference type="GO" id="GO:0015935">
    <property type="term" value="C:small ribosomal subunit"/>
    <property type="evidence" value="ECO:0007669"/>
    <property type="project" value="TreeGrafter"/>
</dbReference>
<dbReference type="GO" id="GO:0019843">
    <property type="term" value="F:rRNA binding"/>
    <property type="evidence" value="ECO:0007669"/>
    <property type="project" value="UniProtKB-UniRule"/>
</dbReference>
<dbReference type="GO" id="GO:0003735">
    <property type="term" value="F:structural constituent of ribosome"/>
    <property type="evidence" value="ECO:0007669"/>
    <property type="project" value="InterPro"/>
</dbReference>
<dbReference type="GO" id="GO:0006412">
    <property type="term" value="P:translation"/>
    <property type="evidence" value="ECO:0007669"/>
    <property type="project" value="UniProtKB-UniRule"/>
</dbReference>
<dbReference type="FunFam" id="1.10.287.1480:FF:000001">
    <property type="entry name" value="30S ribosomal protein S14"/>
    <property type="match status" value="1"/>
</dbReference>
<dbReference type="Gene3D" id="1.10.287.1480">
    <property type="match status" value="1"/>
</dbReference>
<dbReference type="HAMAP" id="MF_00537">
    <property type="entry name" value="Ribosomal_uS14_1"/>
    <property type="match status" value="1"/>
</dbReference>
<dbReference type="InterPro" id="IPR001209">
    <property type="entry name" value="Ribosomal_uS14"/>
</dbReference>
<dbReference type="InterPro" id="IPR023036">
    <property type="entry name" value="Ribosomal_uS14_bac/plastid"/>
</dbReference>
<dbReference type="NCBIfam" id="NF006477">
    <property type="entry name" value="PRK08881.1"/>
    <property type="match status" value="1"/>
</dbReference>
<dbReference type="PANTHER" id="PTHR19836">
    <property type="entry name" value="30S RIBOSOMAL PROTEIN S14"/>
    <property type="match status" value="1"/>
</dbReference>
<dbReference type="PANTHER" id="PTHR19836:SF19">
    <property type="entry name" value="SMALL RIBOSOMAL SUBUNIT PROTEIN US14M"/>
    <property type="match status" value="1"/>
</dbReference>
<dbReference type="Pfam" id="PF00253">
    <property type="entry name" value="Ribosomal_S14"/>
    <property type="match status" value="1"/>
</dbReference>
<dbReference type="SUPFAM" id="SSF57716">
    <property type="entry name" value="Glucocorticoid receptor-like (DNA-binding domain)"/>
    <property type="match status" value="1"/>
</dbReference>
<proteinExistence type="inferred from homology"/>
<protein>
    <recommendedName>
        <fullName evidence="1">Small ribosomal subunit protein uS14</fullName>
    </recommendedName>
    <alternativeName>
        <fullName evidence="2">30S ribosomal protein S14</fullName>
    </alternativeName>
</protein>
<evidence type="ECO:0000255" key="1">
    <source>
        <dbReference type="HAMAP-Rule" id="MF_00537"/>
    </source>
</evidence>
<evidence type="ECO:0000305" key="2"/>
<accession>Q0ABG2</accession>
<comment type="function">
    <text evidence="1">Binds 16S rRNA, required for the assembly of 30S particles and may also be responsible for determining the conformation of the 16S rRNA at the A site.</text>
</comment>
<comment type="subunit">
    <text evidence="1">Part of the 30S ribosomal subunit. Contacts proteins S3 and S10.</text>
</comment>
<comment type="similarity">
    <text evidence="1">Belongs to the universal ribosomal protein uS14 family.</text>
</comment>
<reference key="1">
    <citation type="submission" date="2006-08" db="EMBL/GenBank/DDBJ databases">
        <title>Complete sequence of Alkalilimnicola ehrilichei MLHE-1.</title>
        <authorList>
            <person name="Copeland A."/>
            <person name="Lucas S."/>
            <person name="Lapidus A."/>
            <person name="Barry K."/>
            <person name="Detter J.C."/>
            <person name="Glavina del Rio T."/>
            <person name="Hammon N."/>
            <person name="Israni S."/>
            <person name="Dalin E."/>
            <person name="Tice H."/>
            <person name="Pitluck S."/>
            <person name="Sims D."/>
            <person name="Brettin T."/>
            <person name="Bruce D."/>
            <person name="Han C."/>
            <person name="Tapia R."/>
            <person name="Gilna P."/>
            <person name="Schmutz J."/>
            <person name="Larimer F."/>
            <person name="Land M."/>
            <person name="Hauser L."/>
            <person name="Kyrpides N."/>
            <person name="Mikhailova N."/>
            <person name="Oremland R.S."/>
            <person name="Hoeft S.E."/>
            <person name="Switzer-Blum J."/>
            <person name="Kulp T."/>
            <person name="King G."/>
            <person name="Tabita R."/>
            <person name="Witte B."/>
            <person name="Santini J.M."/>
            <person name="Basu P."/>
            <person name="Hollibaugh J.T."/>
            <person name="Xie G."/>
            <person name="Stolz J.F."/>
            <person name="Richardson P."/>
        </authorList>
    </citation>
    <scope>NUCLEOTIDE SEQUENCE [LARGE SCALE GENOMIC DNA]</scope>
    <source>
        <strain>ATCC BAA-1101 / DSM 17681 / MLHE-1</strain>
    </source>
</reference>
<feature type="chain" id="PRO_1000128290" description="Small ribosomal subunit protein uS14">
    <location>
        <begin position="1"/>
        <end position="101"/>
    </location>
</feature>
<gene>
    <name evidence="1" type="primary">rpsN</name>
    <name type="ordered locus">Mlg_0471</name>
</gene>
<organism>
    <name type="scientific">Alkalilimnicola ehrlichii (strain ATCC BAA-1101 / DSM 17681 / MLHE-1)</name>
    <dbReference type="NCBI Taxonomy" id="187272"/>
    <lineage>
        <taxon>Bacteria</taxon>
        <taxon>Pseudomonadati</taxon>
        <taxon>Pseudomonadota</taxon>
        <taxon>Gammaproteobacteria</taxon>
        <taxon>Chromatiales</taxon>
        <taxon>Ectothiorhodospiraceae</taxon>
        <taxon>Alkalilimnicola</taxon>
    </lineage>
</organism>
<name>RS14_ALKEH</name>
<sequence>MAKVSMVERERKRQKTVRRFAAKREALKAIINSVDATQQERFEAQLKLQKLPRDSSPVRGRNRCRVTGRPRGYYRKFGLGRNKLREAAMNGEIPGLVKSSW</sequence>